<protein>
    <recommendedName>
        <fullName evidence="1">Homoserine O-succinyltransferase</fullName>
        <shortName evidence="1">HST</shortName>
        <ecNumber evidence="1">2.3.1.46</ecNumber>
    </recommendedName>
    <alternativeName>
        <fullName evidence="1">Homoserine transsuccinylase</fullName>
        <shortName evidence="1">HTS</shortName>
    </alternativeName>
</protein>
<sequence length="313" mass="36336">MPIRIPDQLPAADVLRTENIFVMSETRAASQEIRPLRVLILNLMPKKIETETQFLRLLSNSPLQVNVELLRIDDRPSKNTPTEHLDNFYRQFEMVKNRNFDGLIITGAPLGLVQFEDVIYWDHLKTIMEWAKSHVTSTLYVCWAAQAGLKLLYDLPKKTRKEKLSGVYHHRIHKPYHPVLRGFDDSFLAPHSRYADFSPEYLAEHTDLDILATSDDAGVYLATTKDKRNVFVTGHPEYDPHTLHNEYIRDLGEGMEPAIPVNYYPNDNPDNPPIASWRSHGHLLFSNWLNYCVYQQTPYDLDHFSEEAFTKDE</sequence>
<comment type="function">
    <text evidence="1">Transfers a succinyl group from succinyl-CoA to L-homoserine, forming succinyl-L-homoserine.</text>
</comment>
<comment type="catalytic activity">
    <reaction evidence="1">
        <text>L-homoserine + succinyl-CoA = O-succinyl-L-homoserine + CoA</text>
        <dbReference type="Rhea" id="RHEA:22008"/>
        <dbReference type="ChEBI" id="CHEBI:57287"/>
        <dbReference type="ChEBI" id="CHEBI:57292"/>
        <dbReference type="ChEBI" id="CHEBI:57476"/>
        <dbReference type="ChEBI" id="CHEBI:57661"/>
        <dbReference type="EC" id="2.3.1.46"/>
    </reaction>
</comment>
<comment type="pathway">
    <text evidence="1">Amino-acid biosynthesis; L-methionine biosynthesis via de novo pathway; O-succinyl-L-homoserine from L-homoserine: step 1/1.</text>
</comment>
<comment type="subcellular location">
    <subcellularLocation>
        <location evidence="1">Cytoplasm</location>
    </subcellularLocation>
</comment>
<comment type="similarity">
    <text evidence="1">Belongs to the MetA family.</text>
</comment>
<proteinExistence type="inferred from homology"/>
<dbReference type="EC" id="2.3.1.46" evidence="1"/>
<dbReference type="EMBL" id="AE016795">
    <property type="protein sequence ID" value="AAO11114.1"/>
    <property type="molecule type" value="Genomic_DNA"/>
</dbReference>
<dbReference type="SMR" id="Q8D937"/>
<dbReference type="KEGG" id="vvu:VV1_2772"/>
<dbReference type="HOGENOM" id="CLU_057851_0_1_6"/>
<dbReference type="UniPathway" id="UPA00051">
    <property type="reaction ID" value="UER00075"/>
</dbReference>
<dbReference type="Proteomes" id="UP000002275">
    <property type="component" value="Chromosome 1"/>
</dbReference>
<dbReference type="GO" id="GO:0005737">
    <property type="term" value="C:cytoplasm"/>
    <property type="evidence" value="ECO:0007669"/>
    <property type="project" value="UniProtKB-SubCell"/>
</dbReference>
<dbReference type="GO" id="GO:0004414">
    <property type="term" value="F:homoserine O-acetyltransferase activity"/>
    <property type="evidence" value="ECO:0007669"/>
    <property type="project" value="UniProtKB-UniRule"/>
</dbReference>
<dbReference type="GO" id="GO:0008899">
    <property type="term" value="F:homoserine O-succinyltransferase activity"/>
    <property type="evidence" value="ECO:0007669"/>
    <property type="project" value="UniProtKB-EC"/>
</dbReference>
<dbReference type="GO" id="GO:0019281">
    <property type="term" value="P:L-methionine biosynthetic process from homoserine via O-succinyl-L-homoserine and cystathionine"/>
    <property type="evidence" value="ECO:0007669"/>
    <property type="project" value="InterPro"/>
</dbReference>
<dbReference type="CDD" id="cd03131">
    <property type="entry name" value="GATase1_HTS"/>
    <property type="match status" value="1"/>
</dbReference>
<dbReference type="FunFam" id="3.40.50.880:FF:000004">
    <property type="entry name" value="Homoserine O-succinyltransferase"/>
    <property type="match status" value="1"/>
</dbReference>
<dbReference type="Gene3D" id="3.40.50.880">
    <property type="match status" value="1"/>
</dbReference>
<dbReference type="HAMAP" id="MF_00295">
    <property type="entry name" value="MetA_acyltransf"/>
    <property type="match status" value="1"/>
</dbReference>
<dbReference type="InterPro" id="IPR029062">
    <property type="entry name" value="Class_I_gatase-like"/>
</dbReference>
<dbReference type="InterPro" id="IPR005697">
    <property type="entry name" value="HST_MetA"/>
</dbReference>
<dbReference type="InterPro" id="IPR033752">
    <property type="entry name" value="MetA_family"/>
</dbReference>
<dbReference type="NCBIfam" id="TIGR01001">
    <property type="entry name" value="metA"/>
    <property type="match status" value="1"/>
</dbReference>
<dbReference type="PANTHER" id="PTHR20919">
    <property type="entry name" value="HOMOSERINE O-SUCCINYLTRANSFERASE"/>
    <property type="match status" value="1"/>
</dbReference>
<dbReference type="PANTHER" id="PTHR20919:SF0">
    <property type="entry name" value="HOMOSERINE O-SUCCINYLTRANSFERASE"/>
    <property type="match status" value="1"/>
</dbReference>
<dbReference type="Pfam" id="PF04204">
    <property type="entry name" value="HTS"/>
    <property type="match status" value="1"/>
</dbReference>
<dbReference type="PIRSF" id="PIRSF000450">
    <property type="entry name" value="H_ser_succinyltr"/>
    <property type="match status" value="1"/>
</dbReference>
<dbReference type="SUPFAM" id="SSF52317">
    <property type="entry name" value="Class I glutamine amidotransferase-like"/>
    <property type="match status" value="1"/>
</dbReference>
<organism>
    <name type="scientific">Vibrio vulnificus (strain CMCP6)</name>
    <dbReference type="NCBI Taxonomy" id="216895"/>
    <lineage>
        <taxon>Bacteria</taxon>
        <taxon>Pseudomonadati</taxon>
        <taxon>Pseudomonadota</taxon>
        <taxon>Gammaproteobacteria</taxon>
        <taxon>Vibrionales</taxon>
        <taxon>Vibrionaceae</taxon>
        <taxon>Vibrio</taxon>
    </lineage>
</organism>
<accession>Q8D937</accession>
<feature type="chain" id="PRO_0000199766" description="Homoserine O-succinyltransferase">
    <location>
        <begin position="1"/>
        <end position="313"/>
    </location>
</feature>
<feature type="active site" description="Acyl-thioester intermediate" evidence="1">
    <location>
        <position position="142"/>
    </location>
</feature>
<feature type="active site" description="Proton acceptor" evidence="1">
    <location>
        <position position="235"/>
    </location>
</feature>
<feature type="active site" evidence="1">
    <location>
        <position position="237"/>
    </location>
</feature>
<feature type="binding site" evidence="1">
    <location>
        <position position="163"/>
    </location>
    <ligand>
        <name>substrate</name>
    </ligand>
</feature>
<feature type="binding site" evidence="1">
    <location>
        <position position="192"/>
    </location>
    <ligand>
        <name>substrate</name>
    </ligand>
</feature>
<feature type="binding site" evidence="1">
    <location>
        <position position="249"/>
    </location>
    <ligand>
        <name>substrate</name>
    </ligand>
</feature>
<feature type="site" description="Important for acyl-CoA specificity" evidence="1">
    <location>
        <position position="111"/>
    </location>
</feature>
<feature type="site" description="Important for substrate specificity" evidence="1">
    <location>
        <position position="192"/>
    </location>
</feature>
<keyword id="KW-0012">Acyltransferase</keyword>
<keyword id="KW-0028">Amino-acid biosynthesis</keyword>
<keyword id="KW-0963">Cytoplasm</keyword>
<keyword id="KW-0486">Methionine biosynthesis</keyword>
<keyword id="KW-0808">Transferase</keyword>
<gene>
    <name evidence="1" type="primary">metAS</name>
    <name type="ordered locus">VV1_2772</name>
</gene>
<reference key="1">
    <citation type="submission" date="2002-12" db="EMBL/GenBank/DDBJ databases">
        <title>Complete genome sequence of Vibrio vulnificus CMCP6.</title>
        <authorList>
            <person name="Rhee J.H."/>
            <person name="Kim S.Y."/>
            <person name="Chung S.S."/>
            <person name="Kim J.J."/>
            <person name="Moon Y.H."/>
            <person name="Jeong H."/>
            <person name="Choy H.E."/>
        </authorList>
    </citation>
    <scope>NUCLEOTIDE SEQUENCE [LARGE SCALE GENOMIC DNA]</scope>
    <source>
        <strain>CMCP6</strain>
    </source>
</reference>
<name>METAS_VIBVU</name>
<evidence type="ECO:0000255" key="1">
    <source>
        <dbReference type="HAMAP-Rule" id="MF_00295"/>
    </source>
</evidence>